<sequence length="283" mass="32902">MKIKKKYCGHVIIVGKANVGKSTLLNNIIGKKISIVSRKKNTTQSNITGIKTEDNYQSIYIDTPGVVFDKNNNQMKHHKNNFYQTTQIATLIIFIIDRIDWTIHDEIILNEIKKTKIPILIIINKIDKISNKIILLPFINFLKKKIDFIEILPISAKKISNLILLKNIIKSYLPENCHIYPECYITTNSDFFTVSEIIREQLILFLGDELPSIIKVEIESFKKKEKIALYIKAIIWVKNVRQKSIVIGHNGEKIKKISMISRNNIEKKFYIKTHLVLWVKDKN</sequence>
<keyword id="KW-1003">Cell membrane</keyword>
<keyword id="KW-0963">Cytoplasm</keyword>
<keyword id="KW-0342">GTP-binding</keyword>
<keyword id="KW-0472">Membrane</keyword>
<keyword id="KW-0547">Nucleotide-binding</keyword>
<keyword id="KW-1185">Reference proteome</keyword>
<keyword id="KW-0690">Ribosome biogenesis</keyword>
<keyword id="KW-0694">RNA-binding</keyword>
<keyword id="KW-0699">rRNA-binding</keyword>
<reference key="1">
    <citation type="journal article" date="2000" name="Nature">
        <title>Genome sequence of the endocellular bacterial symbiont of aphids Buchnera sp. APS.</title>
        <authorList>
            <person name="Shigenobu S."/>
            <person name="Watanabe H."/>
            <person name="Hattori M."/>
            <person name="Sakaki Y."/>
            <person name="Ishikawa H."/>
        </authorList>
    </citation>
    <scope>NUCLEOTIDE SEQUENCE [LARGE SCALE GENOMIC DNA]</scope>
    <source>
        <strain>APS</strain>
    </source>
</reference>
<name>ERA_BUCAI</name>
<gene>
    <name evidence="1" type="primary">era</name>
    <name type="ordered locus">BU257</name>
</gene>
<accession>P57345</accession>
<dbReference type="EMBL" id="BA000003">
    <property type="protein sequence ID" value="BAB12967.1"/>
    <property type="molecule type" value="Genomic_DNA"/>
</dbReference>
<dbReference type="RefSeq" id="NP_240081.1">
    <property type="nucleotide sequence ID" value="NC_002528.1"/>
</dbReference>
<dbReference type="RefSeq" id="WP_010896029.1">
    <property type="nucleotide sequence ID" value="NC_002528.1"/>
</dbReference>
<dbReference type="SMR" id="P57345"/>
<dbReference type="STRING" id="563178.BUAP5A_252"/>
<dbReference type="EnsemblBacteria" id="BAB12967">
    <property type="protein sequence ID" value="BAB12967"/>
    <property type="gene ID" value="BAB12967"/>
</dbReference>
<dbReference type="KEGG" id="buc:BU257"/>
<dbReference type="PATRIC" id="fig|107806.10.peg.267"/>
<dbReference type="eggNOG" id="COG1159">
    <property type="taxonomic scope" value="Bacteria"/>
</dbReference>
<dbReference type="HOGENOM" id="CLU_038009_1_2_6"/>
<dbReference type="Proteomes" id="UP000001806">
    <property type="component" value="Chromosome"/>
</dbReference>
<dbReference type="GO" id="GO:0005829">
    <property type="term" value="C:cytosol"/>
    <property type="evidence" value="ECO:0007669"/>
    <property type="project" value="TreeGrafter"/>
</dbReference>
<dbReference type="GO" id="GO:0005886">
    <property type="term" value="C:plasma membrane"/>
    <property type="evidence" value="ECO:0007669"/>
    <property type="project" value="UniProtKB-SubCell"/>
</dbReference>
<dbReference type="GO" id="GO:0005525">
    <property type="term" value="F:GTP binding"/>
    <property type="evidence" value="ECO:0007669"/>
    <property type="project" value="UniProtKB-UniRule"/>
</dbReference>
<dbReference type="GO" id="GO:0003924">
    <property type="term" value="F:GTPase activity"/>
    <property type="evidence" value="ECO:0007669"/>
    <property type="project" value="UniProtKB-UniRule"/>
</dbReference>
<dbReference type="GO" id="GO:0043024">
    <property type="term" value="F:ribosomal small subunit binding"/>
    <property type="evidence" value="ECO:0007669"/>
    <property type="project" value="TreeGrafter"/>
</dbReference>
<dbReference type="GO" id="GO:0070181">
    <property type="term" value="F:small ribosomal subunit rRNA binding"/>
    <property type="evidence" value="ECO:0007669"/>
    <property type="project" value="UniProtKB-UniRule"/>
</dbReference>
<dbReference type="GO" id="GO:0000028">
    <property type="term" value="P:ribosomal small subunit assembly"/>
    <property type="evidence" value="ECO:0007669"/>
    <property type="project" value="TreeGrafter"/>
</dbReference>
<dbReference type="CDD" id="cd04163">
    <property type="entry name" value="Era"/>
    <property type="match status" value="1"/>
</dbReference>
<dbReference type="CDD" id="cd22534">
    <property type="entry name" value="KH-II_Era"/>
    <property type="match status" value="1"/>
</dbReference>
<dbReference type="Gene3D" id="3.30.300.20">
    <property type="match status" value="1"/>
</dbReference>
<dbReference type="Gene3D" id="3.40.50.300">
    <property type="entry name" value="P-loop containing nucleotide triphosphate hydrolases"/>
    <property type="match status" value="1"/>
</dbReference>
<dbReference type="HAMAP" id="MF_00367">
    <property type="entry name" value="GTPase_Era"/>
    <property type="match status" value="1"/>
</dbReference>
<dbReference type="InterPro" id="IPR030388">
    <property type="entry name" value="G_ERA_dom"/>
</dbReference>
<dbReference type="InterPro" id="IPR006073">
    <property type="entry name" value="GTP-bd"/>
</dbReference>
<dbReference type="InterPro" id="IPR005662">
    <property type="entry name" value="GTPase_Era-like"/>
</dbReference>
<dbReference type="InterPro" id="IPR015946">
    <property type="entry name" value="KH_dom-like_a/b"/>
</dbReference>
<dbReference type="InterPro" id="IPR004044">
    <property type="entry name" value="KH_dom_type_2"/>
</dbReference>
<dbReference type="InterPro" id="IPR009019">
    <property type="entry name" value="KH_sf_prok-type"/>
</dbReference>
<dbReference type="InterPro" id="IPR027417">
    <property type="entry name" value="P-loop_NTPase"/>
</dbReference>
<dbReference type="InterPro" id="IPR005225">
    <property type="entry name" value="Small_GTP-bd"/>
</dbReference>
<dbReference type="NCBIfam" id="TIGR00436">
    <property type="entry name" value="era"/>
    <property type="match status" value="1"/>
</dbReference>
<dbReference type="NCBIfam" id="NF000908">
    <property type="entry name" value="PRK00089.1"/>
    <property type="match status" value="1"/>
</dbReference>
<dbReference type="NCBIfam" id="TIGR00231">
    <property type="entry name" value="small_GTP"/>
    <property type="match status" value="1"/>
</dbReference>
<dbReference type="PANTHER" id="PTHR42698">
    <property type="entry name" value="GTPASE ERA"/>
    <property type="match status" value="1"/>
</dbReference>
<dbReference type="PANTHER" id="PTHR42698:SF1">
    <property type="entry name" value="GTPASE ERA, MITOCHONDRIAL"/>
    <property type="match status" value="1"/>
</dbReference>
<dbReference type="Pfam" id="PF07650">
    <property type="entry name" value="KH_2"/>
    <property type="match status" value="1"/>
</dbReference>
<dbReference type="Pfam" id="PF01926">
    <property type="entry name" value="MMR_HSR1"/>
    <property type="match status" value="1"/>
</dbReference>
<dbReference type="SUPFAM" id="SSF52540">
    <property type="entry name" value="P-loop containing nucleoside triphosphate hydrolases"/>
    <property type="match status" value="1"/>
</dbReference>
<dbReference type="SUPFAM" id="SSF54814">
    <property type="entry name" value="Prokaryotic type KH domain (KH-domain type II)"/>
    <property type="match status" value="1"/>
</dbReference>
<dbReference type="PROSITE" id="PS51713">
    <property type="entry name" value="G_ERA"/>
    <property type="match status" value="1"/>
</dbReference>
<dbReference type="PROSITE" id="PS50823">
    <property type="entry name" value="KH_TYPE_2"/>
    <property type="match status" value="1"/>
</dbReference>
<feature type="chain" id="PRO_0000180002" description="GTPase Era">
    <location>
        <begin position="1"/>
        <end position="283"/>
    </location>
</feature>
<feature type="domain" description="Era-type G" evidence="2">
    <location>
        <begin position="7"/>
        <end position="175"/>
    </location>
</feature>
<feature type="domain" description="KH type-2" evidence="1">
    <location>
        <begin position="198"/>
        <end position="283"/>
    </location>
</feature>
<feature type="region of interest" description="G1" evidence="2">
    <location>
        <begin position="15"/>
        <end position="22"/>
    </location>
</feature>
<feature type="region of interest" description="G2" evidence="2">
    <location>
        <begin position="41"/>
        <end position="45"/>
    </location>
</feature>
<feature type="region of interest" description="G3" evidence="2">
    <location>
        <begin position="62"/>
        <end position="65"/>
    </location>
</feature>
<feature type="region of interest" description="G4" evidence="2">
    <location>
        <begin position="124"/>
        <end position="127"/>
    </location>
</feature>
<feature type="region of interest" description="G5" evidence="2">
    <location>
        <begin position="154"/>
        <end position="156"/>
    </location>
</feature>
<feature type="binding site" evidence="1">
    <location>
        <begin position="15"/>
        <end position="22"/>
    </location>
    <ligand>
        <name>GTP</name>
        <dbReference type="ChEBI" id="CHEBI:37565"/>
    </ligand>
</feature>
<feature type="binding site" evidence="1">
    <location>
        <begin position="62"/>
        <end position="66"/>
    </location>
    <ligand>
        <name>GTP</name>
        <dbReference type="ChEBI" id="CHEBI:37565"/>
    </ligand>
</feature>
<feature type="binding site" evidence="1">
    <location>
        <begin position="124"/>
        <end position="127"/>
    </location>
    <ligand>
        <name>GTP</name>
        <dbReference type="ChEBI" id="CHEBI:37565"/>
    </ligand>
</feature>
<protein>
    <recommendedName>
        <fullName evidence="1">GTPase Era</fullName>
    </recommendedName>
</protein>
<evidence type="ECO:0000255" key="1">
    <source>
        <dbReference type="HAMAP-Rule" id="MF_00367"/>
    </source>
</evidence>
<evidence type="ECO:0000255" key="2">
    <source>
        <dbReference type="PROSITE-ProRule" id="PRU01050"/>
    </source>
</evidence>
<organism>
    <name type="scientific">Buchnera aphidicola subsp. Acyrthosiphon pisum (strain APS)</name>
    <name type="common">Acyrthosiphon pisum symbiotic bacterium</name>
    <dbReference type="NCBI Taxonomy" id="107806"/>
    <lineage>
        <taxon>Bacteria</taxon>
        <taxon>Pseudomonadati</taxon>
        <taxon>Pseudomonadota</taxon>
        <taxon>Gammaproteobacteria</taxon>
        <taxon>Enterobacterales</taxon>
        <taxon>Erwiniaceae</taxon>
        <taxon>Buchnera</taxon>
    </lineage>
</organism>
<proteinExistence type="inferred from homology"/>
<comment type="function">
    <text evidence="1">An essential GTPase that binds both GDP and GTP, with rapid nucleotide exchange. Plays a role in 16S rRNA processing and 30S ribosomal subunit biogenesis and possibly also in cell cycle regulation and energy metabolism.</text>
</comment>
<comment type="subunit">
    <text evidence="1">Monomer.</text>
</comment>
<comment type="subcellular location">
    <subcellularLocation>
        <location>Cytoplasm</location>
    </subcellularLocation>
    <subcellularLocation>
        <location evidence="1">Cell membrane</location>
        <topology evidence="1">Peripheral membrane protein</topology>
    </subcellularLocation>
</comment>
<comment type="similarity">
    <text evidence="1 2">Belongs to the TRAFAC class TrmE-Era-EngA-EngB-Septin-like GTPase superfamily. Era GTPase family.</text>
</comment>